<proteinExistence type="inferred from homology"/>
<keyword id="KW-1185">Reference proteome</keyword>
<keyword id="KW-0687">Ribonucleoprotein</keyword>
<keyword id="KW-0689">Ribosomal protein</keyword>
<keyword id="KW-0694">RNA-binding</keyword>
<keyword id="KW-0699">rRNA-binding</keyword>
<comment type="function">
    <text evidence="1">One of the early assembly proteins it binds 23S rRNA. One of the proteins that surrounds the polypeptide exit tunnel on the outside of the ribosome. Forms the main docking site for trigger factor binding to the ribosome.</text>
</comment>
<comment type="subunit">
    <text evidence="1">Part of the 50S ribosomal subunit. Contacts protein L29, and trigger factor when it is bound to the ribosome.</text>
</comment>
<comment type="similarity">
    <text evidence="1">Belongs to the universal ribosomal protein uL23 family.</text>
</comment>
<name>RL23_SYNE7</name>
<evidence type="ECO:0000255" key="1">
    <source>
        <dbReference type="HAMAP-Rule" id="MF_01369"/>
    </source>
</evidence>
<evidence type="ECO:0000305" key="2"/>
<dbReference type="EMBL" id="CP000100">
    <property type="protein sequence ID" value="ABB58260.1"/>
    <property type="molecule type" value="Genomic_DNA"/>
</dbReference>
<dbReference type="RefSeq" id="WP_011244177.1">
    <property type="nucleotide sequence ID" value="NZ_JACJTX010000001.1"/>
</dbReference>
<dbReference type="SMR" id="Q31L09"/>
<dbReference type="STRING" id="1140.Synpcc7942_2230"/>
<dbReference type="PaxDb" id="1140-Synpcc7942_2230"/>
<dbReference type="KEGG" id="syf:Synpcc7942_2230"/>
<dbReference type="eggNOG" id="COG0089">
    <property type="taxonomic scope" value="Bacteria"/>
</dbReference>
<dbReference type="HOGENOM" id="CLU_037562_3_2_3"/>
<dbReference type="OrthoDB" id="9793353at2"/>
<dbReference type="BioCyc" id="SYNEL:SYNPCC7942_2230-MONOMER"/>
<dbReference type="Proteomes" id="UP000889800">
    <property type="component" value="Chromosome"/>
</dbReference>
<dbReference type="GO" id="GO:1990904">
    <property type="term" value="C:ribonucleoprotein complex"/>
    <property type="evidence" value="ECO:0007669"/>
    <property type="project" value="UniProtKB-KW"/>
</dbReference>
<dbReference type="GO" id="GO:0005840">
    <property type="term" value="C:ribosome"/>
    <property type="evidence" value="ECO:0007669"/>
    <property type="project" value="UniProtKB-KW"/>
</dbReference>
<dbReference type="GO" id="GO:0019843">
    <property type="term" value="F:rRNA binding"/>
    <property type="evidence" value="ECO:0007669"/>
    <property type="project" value="UniProtKB-UniRule"/>
</dbReference>
<dbReference type="GO" id="GO:0003735">
    <property type="term" value="F:structural constituent of ribosome"/>
    <property type="evidence" value="ECO:0007669"/>
    <property type="project" value="InterPro"/>
</dbReference>
<dbReference type="GO" id="GO:0006412">
    <property type="term" value="P:translation"/>
    <property type="evidence" value="ECO:0007669"/>
    <property type="project" value="UniProtKB-UniRule"/>
</dbReference>
<dbReference type="FunFam" id="3.30.70.330:FF:000001">
    <property type="entry name" value="50S ribosomal protein L23"/>
    <property type="match status" value="1"/>
</dbReference>
<dbReference type="Gene3D" id="3.30.70.330">
    <property type="match status" value="1"/>
</dbReference>
<dbReference type="HAMAP" id="MF_01369_B">
    <property type="entry name" value="Ribosomal_uL23_B"/>
    <property type="match status" value="1"/>
</dbReference>
<dbReference type="InterPro" id="IPR012677">
    <property type="entry name" value="Nucleotide-bd_a/b_plait_sf"/>
</dbReference>
<dbReference type="InterPro" id="IPR013025">
    <property type="entry name" value="Ribosomal_uL23-like"/>
</dbReference>
<dbReference type="InterPro" id="IPR012678">
    <property type="entry name" value="Ribosomal_uL23/eL15/eS24_sf"/>
</dbReference>
<dbReference type="NCBIfam" id="NF004363">
    <property type="entry name" value="PRK05738.2-4"/>
    <property type="match status" value="1"/>
</dbReference>
<dbReference type="NCBIfam" id="NF004368">
    <property type="entry name" value="PRK05738.3-4"/>
    <property type="match status" value="1"/>
</dbReference>
<dbReference type="PANTHER" id="PTHR11620">
    <property type="entry name" value="60S RIBOSOMAL PROTEIN L23A"/>
    <property type="match status" value="1"/>
</dbReference>
<dbReference type="Pfam" id="PF00276">
    <property type="entry name" value="Ribosomal_L23"/>
    <property type="match status" value="1"/>
</dbReference>
<dbReference type="SUPFAM" id="SSF54189">
    <property type="entry name" value="Ribosomal proteins S24e, L23 and L15e"/>
    <property type="match status" value="1"/>
</dbReference>
<reference key="1">
    <citation type="submission" date="2005-08" db="EMBL/GenBank/DDBJ databases">
        <title>Complete sequence of chromosome 1 of Synechococcus elongatus PCC 7942.</title>
        <authorList>
            <consortium name="US DOE Joint Genome Institute"/>
            <person name="Copeland A."/>
            <person name="Lucas S."/>
            <person name="Lapidus A."/>
            <person name="Barry K."/>
            <person name="Detter J.C."/>
            <person name="Glavina T."/>
            <person name="Hammon N."/>
            <person name="Israni S."/>
            <person name="Pitluck S."/>
            <person name="Schmutz J."/>
            <person name="Larimer F."/>
            <person name="Land M."/>
            <person name="Kyrpides N."/>
            <person name="Lykidis A."/>
            <person name="Golden S."/>
            <person name="Richardson P."/>
        </authorList>
    </citation>
    <scope>NUCLEOTIDE SEQUENCE [LARGE SCALE GENOMIC DNA]</scope>
    <source>
        <strain>ATCC 33912 / PCC 7942 / FACHB-805</strain>
    </source>
</reference>
<sequence>MAEANIRALADIIRRPIITEKATRLLENNQYTFEVDPRASKPEIKAAIEALFQVKVVGLSTQLPPRKARRVGRFAGHRAQVKRAVARLADGDSITLFPEV</sequence>
<gene>
    <name evidence="1" type="primary">rplW</name>
    <name evidence="1" type="synonym">rpl23</name>
    <name type="ordered locus">Synpcc7942_2230</name>
</gene>
<protein>
    <recommendedName>
        <fullName evidence="1">Large ribosomal subunit protein uL23</fullName>
    </recommendedName>
    <alternativeName>
        <fullName evidence="2">50S ribosomal protein L23</fullName>
    </alternativeName>
</protein>
<accession>Q31L09</accession>
<feature type="chain" id="PRO_0000272859" description="Large ribosomal subunit protein uL23">
    <location>
        <begin position="1"/>
        <end position="100"/>
    </location>
</feature>
<organism>
    <name type="scientific">Synechococcus elongatus (strain ATCC 33912 / PCC 7942 / FACHB-805)</name>
    <name type="common">Anacystis nidulans R2</name>
    <dbReference type="NCBI Taxonomy" id="1140"/>
    <lineage>
        <taxon>Bacteria</taxon>
        <taxon>Bacillati</taxon>
        <taxon>Cyanobacteriota</taxon>
        <taxon>Cyanophyceae</taxon>
        <taxon>Synechococcales</taxon>
        <taxon>Synechococcaceae</taxon>
        <taxon>Synechococcus</taxon>
    </lineage>
</organism>